<protein>
    <recommendedName>
        <fullName>Putative uncharacterized protein FLJ31958</fullName>
    </recommendedName>
</protein>
<dbReference type="EMBL" id="AK056520">
    <property type="protein sequence ID" value="BAB71202.1"/>
    <property type="molecule type" value="mRNA"/>
</dbReference>
<dbReference type="BioMuta" id="-"/>
<dbReference type="MassIVE" id="Q96MT0"/>
<dbReference type="Pumba" id="Q96MT0"/>
<dbReference type="neXtProt" id="NX_Q96MT0"/>
<dbReference type="InParanoid" id="Q96MT0"/>
<dbReference type="PAN-GO" id="Q96MT0">
    <property type="GO annotations" value="0 GO annotations based on evolutionary models"/>
</dbReference>
<dbReference type="PhylomeDB" id="Q96MT0"/>
<dbReference type="Pharos" id="Q96MT0">
    <property type="development level" value="Tdark"/>
</dbReference>
<dbReference type="Proteomes" id="UP000005640">
    <property type="component" value="Unplaced"/>
</dbReference>
<dbReference type="RNAct" id="Q96MT0">
    <property type="molecule type" value="protein"/>
</dbReference>
<feature type="chain" id="PRO_0000326048" description="Putative uncharacterized protein FLJ31958">
    <location>
        <begin position="1"/>
        <end position="163"/>
    </location>
</feature>
<proteinExistence type="evidence at protein level"/>
<accession>Q96MT0</accession>
<keyword id="KW-1267">Proteomics identification</keyword>
<keyword id="KW-1185">Reference proteome</keyword>
<organism>
    <name type="scientific">Homo sapiens</name>
    <name type="common">Human</name>
    <dbReference type="NCBI Taxonomy" id="9606"/>
    <lineage>
        <taxon>Eukaryota</taxon>
        <taxon>Metazoa</taxon>
        <taxon>Chordata</taxon>
        <taxon>Craniata</taxon>
        <taxon>Vertebrata</taxon>
        <taxon>Euteleostomi</taxon>
        <taxon>Mammalia</taxon>
        <taxon>Eutheria</taxon>
        <taxon>Euarchontoglires</taxon>
        <taxon>Primates</taxon>
        <taxon>Haplorrhini</taxon>
        <taxon>Catarrhini</taxon>
        <taxon>Hominidae</taxon>
        <taxon>Homo</taxon>
    </lineage>
</organism>
<reference key="1">
    <citation type="journal article" date="2004" name="Nat. Genet.">
        <title>Complete sequencing and characterization of 21,243 full-length human cDNAs.</title>
        <authorList>
            <person name="Ota T."/>
            <person name="Suzuki Y."/>
            <person name="Nishikawa T."/>
            <person name="Otsuki T."/>
            <person name="Sugiyama T."/>
            <person name="Irie R."/>
            <person name="Wakamatsu A."/>
            <person name="Hayashi K."/>
            <person name="Sato H."/>
            <person name="Nagai K."/>
            <person name="Kimura K."/>
            <person name="Makita H."/>
            <person name="Sekine M."/>
            <person name="Obayashi M."/>
            <person name="Nishi T."/>
            <person name="Shibahara T."/>
            <person name="Tanaka T."/>
            <person name="Ishii S."/>
            <person name="Yamamoto J."/>
            <person name="Saito K."/>
            <person name="Kawai Y."/>
            <person name="Isono Y."/>
            <person name="Nakamura Y."/>
            <person name="Nagahari K."/>
            <person name="Murakami K."/>
            <person name="Yasuda T."/>
            <person name="Iwayanagi T."/>
            <person name="Wagatsuma M."/>
            <person name="Shiratori A."/>
            <person name="Sudo H."/>
            <person name="Hosoiri T."/>
            <person name="Kaku Y."/>
            <person name="Kodaira H."/>
            <person name="Kondo H."/>
            <person name="Sugawara M."/>
            <person name="Takahashi M."/>
            <person name="Kanda K."/>
            <person name="Yokoi T."/>
            <person name="Furuya T."/>
            <person name="Kikkawa E."/>
            <person name="Omura Y."/>
            <person name="Abe K."/>
            <person name="Kamihara K."/>
            <person name="Katsuta N."/>
            <person name="Sato K."/>
            <person name="Tanikawa M."/>
            <person name="Yamazaki M."/>
            <person name="Ninomiya K."/>
            <person name="Ishibashi T."/>
            <person name="Yamashita H."/>
            <person name="Murakawa K."/>
            <person name="Fujimori K."/>
            <person name="Tanai H."/>
            <person name="Kimata M."/>
            <person name="Watanabe M."/>
            <person name="Hiraoka S."/>
            <person name="Chiba Y."/>
            <person name="Ishida S."/>
            <person name="Ono Y."/>
            <person name="Takiguchi S."/>
            <person name="Watanabe S."/>
            <person name="Yosida M."/>
            <person name="Hotuta T."/>
            <person name="Kusano J."/>
            <person name="Kanehori K."/>
            <person name="Takahashi-Fujii A."/>
            <person name="Hara H."/>
            <person name="Tanase T.-O."/>
            <person name="Nomura Y."/>
            <person name="Togiya S."/>
            <person name="Komai F."/>
            <person name="Hara R."/>
            <person name="Takeuchi K."/>
            <person name="Arita M."/>
            <person name="Imose N."/>
            <person name="Musashino K."/>
            <person name="Yuuki H."/>
            <person name="Oshima A."/>
            <person name="Sasaki N."/>
            <person name="Aotsuka S."/>
            <person name="Yoshikawa Y."/>
            <person name="Matsunawa H."/>
            <person name="Ichihara T."/>
            <person name="Shiohata N."/>
            <person name="Sano S."/>
            <person name="Moriya S."/>
            <person name="Momiyama H."/>
            <person name="Satoh N."/>
            <person name="Takami S."/>
            <person name="Terashima Y."/>
            <person name="Suzuki O."/>
            <person name="Nakagawa S."/>
            <person name="Senoh A."/>
            <person name="Mizoguchi H."/>
            <person name="Goto Y."/>
            <person name="Shimizu F."/>
            <person name="Wakebe H."/>
            <person name="Hishigaki H."/>
            <person name="Watanabe T."/>
            <person name="Sugiyama A."/>
            <person name="Takemoto M."/>
            <person name="Kawakami B."/>
            <person name="Yamazaki M."/>
            <person name="Watanabe K."/>
            <person name="Kumagai A."/>
            <person name="Itakura S."/>
            <person name="Fukuzumi Y."/>
            <person name="Fujimori Y."/>
            <person name="Komiyama M."/>
            <person name="Tashiro H."/>
            <person name="Tanigami A."/>
            <person name="Fujiwara T."/>
            <person name="Ono T."/>
            <person name="Yamada K."/>
            <person name="Fujii Y."/>
            <person name="Ozaki K."/>
            <person name="Hirao M."/>
            <person name="Ohmori Y."/>
            <person name="Kawabata A."/>
            <person name="Hikiji T."/>
            <person name="Kobatake N."/>
            <person name="Inagaki H."/>
            <person name="Ikema Y."/>
            <person name="Okamoto S."/>
            <person name="Okitani R."/>
            <person name="Kawakami T."/>
            <person name="Noguchi S."/>
            <person name="Itoh T."/>
            <person name="Shigeta K."/>
            <person name="Senba T."/>
            <person name="Matsumura K."/>
            <person name="Nakajima Y."/>
            <person name="Mizuno T."/>
            <person name="Morinaga M."/>
            <person name="Sasaki M."/>
            <person name="Togashi T."/>
            <person name="Oyama M."/>
            <person name="Hata H."/>
            <person name="Watanabe M."/>
            <person name="Komatsu T."/>
            <person name="Mizushima-Sugano J."/>
            <person name="Satoh T."/>
            <person name="Shirai Y."/>
            <person name="Takahashi Y."/>
            <person name="Nakagawa K."/>
            <person name="Okumura K."/>
            <person name="Nagase T."/>
            <person name="Nomura N."/>
            <person name="Kikuchi H."/>
            <person name="Masuho Y."/>
            <person name="Yamashita R."/>
            <person name="Nakai K."/>
            <person name="Yada T."/>
            <person name="Nakamura Y."/>
            <person name="Ohara O."/>
            <person name="Isogai T."/>
            <person name="Sugano S."/>
        </authorList>
    </citation>
    <scope>NUCLEOTIDE SEQUENCE [LARGE SCALE MRNA]</scope>
</reference>
<sequence>MFLHSGPARGPCTAAGRSASVRVPVQVAHELQGPDAIVFGAEVEQVHLVANELDAGRVQLLLAQGVAAAVLLVQVVMGEELGEQGHQQARGEVADGQAALLDTAKMLVAEQAVGAGQLQVGLGISNLSKSIGTSQIFLERHRSPLKLSSTLITEMSSGRLEEL</sequence>
<name>YJ006_HUMAN</name>